<dbReference type="EC" id="2.7.1.25"/>
<dbReference type="EMBL" id="X55652">
    <property type="protein sequence ID" value="CAA39183.1"/>
    <property type="molecule type" value="Genomic_DNA"/>
</dbReference>
<dbReference type="PIR" id="S18729">
    <property type="entry name" value="S18729"/>
</dbReference>
<dbReference type="SMR" id="P29811"/>
<dbReference type="UniPathway" id="UPA00140">
    <property type="reaction ID" value="UER00205"/>
</dbReference>
<dbReference type="GO" id="GO:0005737">
    <property type="term" value="C:cytoplasm"/>
    <property type="evidence" value="ECO:0007669"/>
    <property type="project" value="TreeGrafter"/>
</dbReference>
<dbReference type="GO" id="GO:0004020">
    <property type="term" value="F:adenylylsulfate kinase activity"/>
    <property type="evidence" value="ECO:0007669"/>
    <property type="project" value="UniProtKB-UniRule"/>
</dbReference>
<dbReference type="GO" id="GO:0005524">
    <property type="term" value="F:ATP binding"/>
    <property type="evidence" value="ECO:0007669"/>
    <property type="project" value="UniProtKB-UniRule"/>
</dbReference>
<dbReference type="GO" id="GO:0004781">
    <property type="term" value="F:sulfate adenylyltransferase (ATP) activity"/>
    <property type="evidence" value="ECO:0007669"/>
    <property type="project" value="TreeGrafter"/>
</dbReference>
<dbReference type="GO" id="GO:0070814">
    <property type="term" value="P:hydrogen sulfide biosynthetic process"/>
    <property type="evidence" value="ECO:0007669"/>
    <property type="project" value="UniProtKB-UniRule"/>
</dbReference>
<dbReference type="GO" id="GO:0010134">
    <property type="term" value="P:sulfate assimilation via adenylyl sulfate reduction"/>
    <property type="evidence" value="ECO:0007669"/>
    <property type="project" value="TreeGrafter"/>
</dbReference>
<dbReference type="GO" id="GO:0019379">
    <property type="term" value="P:sulfate assimilation, phosphoadenylyl sulfate reduction by phosphoadenylyl-sulfate reductase (thioredoxin)"/>
    <property type="evidence" value="ECO:0007669"/>
    <property type="project" value="TreeGrafter"/>
</dbReference>
<dbReference type="CDD" id="cd02027">
    <property type="entry name" value="APSK"/>
    <property type="match status" value="1"/>
</dbReference>
<dbReference type="Gene3D" id="3.40.50.300">
    <property type="entry name" value="P-loop containing nucleotide triphosphate hydrolases"/>
    <property type="match status" value="1"/>
</dbReference>
<dbReference type="HAMAP" id="MF_00065">
    <property type="entry name" value="Adenylyl_sulf_kinase"/>
    <property type="match status" value="1"/>
</dbReference>
<dbReference type="InterPro" id="IPR002891">
    <property type="entry name" value="APS_kinase"/>
</dbReference>
<dbReference type="InterPro" id="IPR027417">
    <property type="entry name" value="P-loop_NTPase"/>
</dbReference>
<dbReference type="InterPro" id="IPR050512">
    <property type="entry name" value="Sulf_AdTrans/APS_kinase"/>
</dbReference>
<dbReference type="NCBIfam" id="TIGR00455">
    <property type="entry name" value="apsK"/>
    <property type="match status" value="1"/>
</dbReference>
<dbReference type="NCBIfam" id="NF002059">
    <property type="entry name" value="PRK00889.1"/>
    <property type="match status" value="1"/>
</dbReference>
<dbReference type="NCBIfam" id="NF003013">
    <property type="entry name" value="PRK03846.1"/>
    <property type="match status" value="1"/>
</dbReference>
<dbReference type="PANTHER" id="PTHR42700">
    <property type="entry name" value="SULFATE ADENYLYLTRANSFERASE"/>
    <property type="match status" value="1"/>
</dbReference>
<dbReference type="PANTHER" id="PTHR42700:SF1">
    <property type="entry name" value="SULFATE ADENYLYLTRANSFERASE"/>
    <property type="match status" value="1"/>
</dbReference>
<dbReference type="Pfam" id="PF01583">
    <property type="entry name" value="APS_kinase"/>
    <property type="match status" value="1"/>
</dbReference>
<dbReference type="SUPFAM" id="SSF52540">
    <property type="entry name" value="P-loop containing nucleoside triphosphate hydrolases"/>
    <property type="match status" value="1"/>
</dbReference>
<keyword id="KW-0067">ATP-binding</keyword>
<keyword id="KW-0418">Kinase</keyword>
<keyword id="KW-0547">Nucleotide-binding</keyword>
<keyword id="KW-0597">Phosphoprotein</keyword>
<keyword id="KW-0808">Transferase</keyword>
<reference key="1">
    <citation type="journal article" date="1991" name="Antimicrob. Agents Chemother.">
        <title>Nucleotide sequence of the aacC3 gene, a gentamicin resistance determinant encoding aminoglycoside-(3)-N-acetyltransferase III expressed in Pseudomonas aeruginosa but not in Escherichia coli.</title>
        <authorList>
            <person name="Vliegenthart J.S."/>
            <person name="Ketelaar-Van Gaalen P.A.G."/>
            <person name="van de Klundert J.A.M."/>
        </authorList>
    </citation>
    <scope>NUCLEOTIDE SEQUENCE [GENOMIC DNA]</scope>
    <source>
        <strain>PST-I</strain>
    </source>
</reference>
<organism>
    <name type="scientific">Pseudomonas aeruginosa</name>
    <dbReference type="NCBI Taxonomy" id="287"/>
    <lineage>
        <taxon>Bacteria</taxon>
        <taxon>Pseudomonadati</taxon>
        <taxon>Pseudomonadota</taxon>
        <taxon>Gammaproteobacteria</taxon>
        <taxon>Pseudomonadales</taxon>
        <taxon>Pseudomonadaceae</taxon>
        <taxon>Pseudomonas</taxon>
    </lineage>
</organism>
<accession>P29811</accession>
<evidence type="ECO:0000250" key="1"/>
<evidence type="ECO:0000255" key="2"/>
<evidence type="ECO:0000256" key="3">
    <source>
        <dbReference type="SAM" id="MobiDB-lite"/>
    </source>
</evidence>
<evidence type="ECO:0000305" key="4"/>
<protein>
    <recommendedName>
        <fullName>Probable adenylyl-sulfate kinase</fullName>
        <ecNumber>2.7.1.25</ecNumber>
    </recommendedName>
    <alternativeName>
        <fullName>APS kinase</fullName>
    </alternativeName>
    <alternativeName>
        <fullName>ATP adenosine-5'-phosphosulfate 3'-phosphotransferase</fullName>
    </alternativeName>
    <alternativeName>
        <fullName>Adenosine-5'-phosphosulfate kinase</fullName>
    </alternativeName>
</protein>
<comment type="function">
    <text evidence="1">Catalyzes the synthesis of activated sulfate.</text>
</comment>
<comment type="catalytic activity">
    <reaction>
        <text>adenosine 5'-phosphosulfate + ATP = 3'-phosphoadenylyl sulfate + ADP + H(+)</text>
        <dbReference type="Rhea" id="RHEA:24152"/>
        <dbReference type="ChEBI" id="CHEBI:15378"/>
        <dbReference type="ChEBI" id="CHEBI:30616"/>
        <dbReference type="ChEBI" id="CHEBI:58243"/>
        <dbReference type="ChEBI" id="CHEBI:58339"/>
        <dbReference type="ChEBI" id="CHEBI:456216"/>
        <dbReference type="EC" id="2.7.1.25"/>
    </reaction>
</comment>
<comment type="pathway">
    <text>Sulfur metabolism; hydrogen sulfide biosynthesis; sulfite from sulfate: step 2/3.</text>
</comment>
<comment type="similarity">
    <text evidence="4">Belongs to the APS kinase family.</text>
</comment>
<sequence>MIEHPGFVLWFTGLSGAGKTTIAVALENQLRARGIRIERLDGDTVRQSLTKDLGFSKEDRDKNIERVTFVAKLLSRNNVAVLSSFISPYAATRDHVRGETTNFIEVFVDAPLETCIERDVKGMYKKAIAGEIPNFTGISDPYEAPANPDIHVKTHEQTLEESVQTIIRRSSHGWNRTNTFPLKSRPNPPHRHKSKSSRAGEPFISPVFVLSIIA</sequence>
<feature type="chain" id="PRO_0000105914" description="Probable adenylyl-sulfate kinase">
    <location>
        <begin position="1"/>
        <end position="214"/>
    </location>
</feature>
<feature type="region of interest" description="Disordered" evidence="3">
    <location>
        <begin position="174"/>
        <end position="199"/>
    </location>
</feature>
<feature type="active site" description="Phosphoserine intermediate" evidence="1">
    <location>
        <position position="87"/>
    </location>
</feature>
<feature type="binding site" evidence="2">
    <location>
        <begin position="13"/>
        <end position="20"/>
    </location>
    <ligand>
        <name>ATP</name>
        <dbReference type="ChEBI" id="CHEBI:30616"/>
    </ligand>
</feature>
<name>CYSC_PSEAI</name>
<proteinExistence type="inferred from homology"/>